<keyword id="KW-0963">Cytoplasm</keyword>
<keyword id="KW-0489">Methyltransferase</keyword>
<keyword id="KW-1185">Reference proteome</keyword>
<keyword id="KW-0949">S-adenosyl-L-methionine</keyword>
<keyword id="KW-0808">Transferase</keyword>
<sequence length="291" mass="31506">MSEIRLFVTTTEKQAAAILDVMSVNFEEEGYAVATMEIDEKRDVWEASVYMMADEEESVKSRLADALAADFSHLPIEREVLPEIDWIAKSLEGLAPVRAGRFVVHGSHDRDKVKTGEIAIEIDAGQAFGTGHHGTTAGCLEMLACVARSRRVRNVLDLGTGSGVLAIAAWKLLHVPGLATDIDPVATRVASDNARRNGVVDGLTFATAPGFHSTAFGTHGPFDLVIANILARPLMKMAPELVAHIAPGGSVILSGILAEQRWKVLAAYNGQRLKHVQTIWKNGWVTIHLTK</sequence>
<feature type="chain" id="PRO_1000148136" description="Ribosomal protein L11 methyltransferase">
    <location>
        <begin position="1"/>
        <end position="291"/>
    </location>
</feature>
<feature type="binding site" evidence="1">
    <location>
        <position position="136"/>
    </location>
    <ligand>
        <name>S-adenosyl-L-methionine</name>
        <dbReference type="ChEBI" id="CHEBI:59789"/>
    </ligand>
</feature>
<feature type="binding site" evidence="1">
    <location>
        <position position="159"/>
    </location>
    <ligand>
        <name>S-adenosyl-L-methionine</name>
        <dbReference type="ChEBI" id="CHEBI:59789"/>
    </ligand>
</feature>
<feature type="binding site" evidence="1">
    <location>
        <position position="181"/>
    </location>
    <ligand>
        <name>S-adenosyl-L-methionine</name>
        <dbReference type="ChEBI" id="CHEBI:59789"/>
    </ligand>
</feature>
<feature type="binding site" evidence="1">
    <location>
        <position position="228"/>
    </location>
    <ligand>
        <name>S-adenosyl-L-methionine</name>
        <dbReference type="ChEBI" id="CHEBI:59789"/>
    </ligand>
</feature>
<proteinExistence type="inferred from homology"/>
<comment type="function">
    <text evidence="1">Methylates ribosomal protein L11.</text>
</comment>
<comment type="catalytic activity">
    <reaction evidence="1">
        <text>L-lysyl-[protein] + 3 S-adenosyl-L-methionine = N(6),N(6),N(6)-trimethyl-L-lysyl-[protein] + 3 S-adenosyl-L-homocysteine + 3 H(+)</text>
        <dbReference type="Rhea" id="RHEA:54192"/>
        <dbReference type="Rhea" id="RHEA-COMP:9752"/>
        <dbReference type="Rhea" id="RHEA-COMP:13826"/>
        <dbReference type="ChEBI" id="CHEBI:15378"/>
        <dbReference type="ChEBI" id="CHEBI:29969"/>
        <dbReference type="ChEBI" id="CHEBI:57856"/>
        <dbReference type="ChEBI" id="CHEBI:59789"/>
        <dbReference type="ChEBI" id="CHEBI:61961"/>
    </reaction>
</comment>
<comment type="subcellular location">
    <subcellularLocation>
        <location evidence="1">Cytoplasm</location>
    </subcellularLocation>
</comment>
<comment type="similarity">
    <text evidence="1">Belongs to the methyltransferase superfamily. PrmA family.</text>
</comment>
<reference key="1">
    <citation type="journal article" date="2009" name="Appl. Environ. Microbiol.">
        <title>Rhizobium sp. strain NGR234 possesses a remarkable number of secretion systems.</title>
        <authorList>
            <person name="Schmeisser C."/>
            <person name="Liesegang H."/>
            <person name="Krysciak D."/>
            <person name="Bakkou N."/>
            <person name="Le Quere A."/>
            <person name="Wollherr A."/>
            <person name="Heinemeyer I."/>
            <person name="Morgenstern B."/>
            <person name="Pommerening-Roeser A."/>
            <person name="Flores M."/>
            <person name="Palacios R."/>
            <person name="Brenner S."/>
            <person name="Gottschalk G."/>
            <person name="Schmitz R.A."/>
            <person name="Broughton W.J."/>
            <person name="Perret X."/>
            <person name="Strittmatter A.W."/>
            <person name="Streit W.R."/>
        </authorList>
    </citation>
    <scope>NUCLEOTIDE SEQUENCE [LARGE SCALE GENOMIC DNA]</scope>
    <source>
        <strain>NBRC 101917 / NGR234</strain>
    </source>
</reference>
<dbReference type="EC" id="2.1.1.-" evidence="1"/>
<dbReference type="EMBL" id="CP001389">
    <property type="protein sequence ID" value="ACP25851.1"/>
    <property type="molecule type" value="Genomic_DNA"/>
</dbReference>
<dbReference type="RefSeq" id="WP_012708614.1">
    <property type="nucleotide sequence ID" value="NC_012587.1"/>
</dbReference>
<dbReference type="RefSeq" id="YP_002826604.1">
    <property type="nucleotide sequence ID" value="NC_012587.1"/>
</dbReference>
<dbReference type="SMR" id="C3MEL0"/>
<dbReference type="STRING" id="394.NGR_c20880"/>
<dbReference type="KEGG" id="rhi:NGR_c20880"/>
<dbReference type="PATRIC" id="fig|394.7.peg.4911"/>
<dbReference type="eggNOG" id="COG2264">
    <property type="taxonomic scope" value="Bacteria"/>
</dbReference>
<dbReference type="HOGENOM" id="CLU_049382_3_0_5"/>
<dbReference type="OrthoDB" id="9785995at2"/>
<dbReference type="Proteomes" id="UP000001054">
    <property type="component" value="Chromosome"/>
</dbReference>
<dbReference type="GO" id="GO:0005737">
    <property type="term" value="C:cytoplasm"/>
    <property type="evidence" value="ECO:0007669"/>
    <property type="project" value="UniProtKB-SubCell"/>
</dbReference>
<dbReference type="GO" id="GO:0016279">
    <property type="term" value="F:protein-lysine N-methyltransferase activity"/>
    <property type="evidence" value="ECO:0007669"/>
    <property type="project" value="RHEA"/>
</dbReference>
<dbReference type="GO" id="GO:0032259">
    <property type="term" value="P:methylation"/>
    <property type="evidence" value="ECO:0007669"/>
    <property type="project" value="UniProtKB-KW"/>
</dbReference>
<dbReference type="CDD" id="cd02440">
    <property type="entry name" value="AdoMet_MTases"/>
    <property type="match status" value="1"/>
</dbReference>
<dbReference type="Gene3D" id="3.40.50.150">
    <property type="entry name" value="Vaccinia Virus protein VP39"/>
    <property type="match status" value="1"/>
</dbReference>
<dbReference type="HAMAP" id="MF_00735">
    <property type="entry name" value="Methyltr_PrmA"/>
    <property type="match status" value="1"/>
</dbReference>
<dbReference type="InterPro" id="IPR050078">
    <property type="entry name" value="Ribosomal_L11_MeTrfase_PrmA"/>
</dbReference>
<dbReference type="InterPro" id="IPR004498">
    <property type="entry name" value="Ribosomal_PrmA_MeTrfase"/>
</dbReference>
<dbReference type="InterPro" id="IPR029063">
    <property type="entry name" value="SAM-dependent_MTases_sf"/>
</dbReference>
<dbReference type="NCBIfam" id="NF001784">
    <property type="entry name" value="PRK00517.2-1"/>
    <property type="match status" value="1"/>
</dbReference>
<dbReference type="PANTHER" id="PTHR43648">
    <property type="entry name" value="ELECTRON TRANSFER FLAVOPROTEIN BETA SUBUNIT LYSINE METHYLTRANSFERASE"/>
    <property type="match status" value="1"/>
</dbReference>
<dbReference type="PANTHER" id="PTHR43648:SF1">
    <property type="entry name" value="ELECTRON TRANSFER FLAVOPROTEIN BETA SUBUNIT LYSINE METHYLTRANSFERASE"/>
    <property type="match status" value="1"/>
</dbReference>
<dbReference type="Pfam" id="PF06325">
    <property type="entry name" value="PrmA"/>
    <property type="match status" value="1"/>
</dbReference>
<dbReference type="PIRSF" id="PIRSF000401">
    <property type="entry name" value="RPL11_MTase"/>
    <property type="match status" value="1"/>
</dbReference>
<dbReference type="SUPFAM" id="SSF53335">
    <property type="entry name" value="S-adenosyl-L-methionine-dependent methyltransferases"/>
    <property type="match status" value="1"/>
</dbReference>
<protein>
    <recommendedName>
        <fullName evidence="1">Ribosomal protein L11 methyltransferase</fullName>
        <shortName evidence="1">L11 Mtase</shortName>
        <ecNumber evidence="1">2.1.1.-</ecNumber>
    </recommendedName>
</protein>
<organism>
    <name type="scientific">Sinorhizobium fredii (strain NBRC 101917 / NGR234)</name>
    <dbReference type="NCBI Taxonomy" id="394"/>
    <lineage>
        <taxon>Bacteria</taxon>
        <taxon>Pseudomonadati</taxon>
        <taxon>Pseudomonadota</taxon>
        <taxon>Alphaproteobacteria</taxon>
        <taxon>Hyphomicrobiales</taxon>
        <taxon>Rhizobiaceae</taxon>
        <taxon>Sinorhizobium/Ensifer group</taxon>
        <taxon>Sinorhizobium</taxon>
    </lineage>
</organism>
<gene>
    <name evidence="1" type="primary">prmA</name>
    <name type="ordered locus">NGR_c20880</name>
</gene>
<name>PRMA_SINFN</name>
<evidence type="ECO:0000255" key="1">
    <source>
        <dbReference type="HAMAP-Rule" id="MF_00735"/>
    </source>
</evidence>
<accession>C3MEL0</accession>